<sequence length="403" mass="45913">MALRSARGDGPTSGRWDGGAEKGDFNAKRKKKVAEIYQALNSEPTDVAALRRMAISEGGLLTDEIRRKVWPKLLNVNTNDPPPISGKNLRQMSKDYQQVLLDVRRSLRRFPPGMPEEQREGLQEELIDIILLILERNPQLHYYQGYHDIVVTFLLVLGERLATSLVEKLSTHHLRDFMDPTMDNTKHILNYLMPIIDQVNPELHDFMQSAEVGTIFALSWLITWFGHVLSDFRHVVRLYDFFLACHPLMPIYFAAVIVLYREQEVLDCDCDMASVHHLLSQIPQDLPYETLISRAGDLFVQFPPSELAREAAAQPQAEKTAASTFKDFELASAQQRPDMVLRQRFRGLLRPDERTKDVLTKPRTNRFVKLAVMGLTVALGAAALAVVKSALEWAPKFQLQLFP</sequence>
<dbReference type="EMBL" id="BC111319">
    <property type="protein sequence ID" value="AAI11320.1"/>
    <property type="molecule type" value="mRNA"/>
</dbReference>
<dbReference type="RefSeq" id="NP_001033118.1">
    <property type="nucleotide sequence ID" value="NM_001038029.1"/>
</dbReference>
<dbReference type="SMR" id="Q2T9Q1"/>
<dbReference type="FunCoup" id="Q2T9Q1">
    <property type="interactions" value="4393"/>
</dbReference>
<dbReference type="STRING" id="9913.ENSBTAP00000017725"/>
<dbReference type="PaxDb" id="9913-ENSBTAP00000017725"/>
<dbReference type="Ensembl" id="ENSBTAT00000017725.5">
    <property type="protein sequence ID" value="ENSBTAP00000017725.3"/>
    <property type="gene ID" value="ENSBTAG00000013330.5"/>
</dbReference>
<dbReference type="GeneID" id="504543"/>
<dbReference type="KEGG" id="bta:504543"/>
<dbReference type="CTD" id="128637"/>
<dbReference type="VEuPathDB" id="HostDB:ENSBTAG00000013330"/>
<dbReference type="VGNC" id="VGNC:35634">
    <property type="gene designation" value="TBC1D20"/>
</dbReference>
<dbReference type="eggNOG" id="KOG2595">
    <property type="taxonomic scope" value="Eukaryota"/>
</dbReference>
<dbReference type="GeneTree" id="ENSGT00390000014944"/>
<dbReference type="HOGENOM" id="CLU_039465_1_0_1"/>
<dbReference type="InParanoid" id="Q2T9Q1"/>
<dbReference type="OMA" id="VYMFAQI"/>
<dbReference type="OrthoDB" id="206700at2759"/>
<dbReference type="TreeFam" id="TF105942"/>
<dbReference type="Reactome" id="R-BTA-204005">
    <property type="pathway name" value="COPII-mediated vesicle transport"/>
</dbReference>
<dbReference type="Proteomes" id="UP000009136">
    <property type="component" value="Chromosome 13"/>
</dbReference>
<dbReference type="Bgee" id="ENSBTAG00000013330">
    <property type="expression patterns" value="Expressed in thymus and 104 other cell types or tissues"/>
</dbReference>
<dbReference type="GO" id="GO:0005789">
    <property type="term" value="C:endoplasmic reticulum membrane"/>
    <property type="evidence" value="ECO:0000318"/>
    <property type="project" value="GO_Central"/>
</dbReference>
<dbReference type="GO" id="GO:0000139">
    <property type="term" value="C:Golgi membrane"/>
    <property type="evidence" value="ECO:0007669"/>
    <property type="project" value="Ensembl"/>
</dbReference>
<dbReference type="GO" id="GO:0031965">
    <property type="term" value="C:nuclear membrane"/>
    <property type="evidence" value="ECO:0007669"/>
    <property type="project" value="Ensembl"/>
</dbReference>
<dbReference type="GO" id="GO:0005096">
    <property type="term" value="F:GTPase activator activity"/>
    <property type="evidence" value="ECO:0000250"/>
    <property type="project" value="UniProtKB"/>
</dbReference>
<dbReference type="GO" id="GO:0031267">
    <property type="term" value="F:small GTPase binding"/>
    <property type="evidence" value="ECO:0007669"/>
    <property type="project" value="Ensembl"/>
</dbReference>
<dbReference type="GO" id="GO:0001675">
    <property type="term" value="P:acrosome assembly"/>
    <property type="evidence" value="ECO:0007669"/>
    <property type="project" value="Ensembl"/>
</dbReference>
<dbReference type="GO" id="GO:0090110">
    <property type="term" value="P:COPII-coated vesicle cargo loading"/>
    <property type="evidence" value="ECO:0007669"/>
    <property type="project" value="Ensembl"/>
</dbReference>
<dbReference type="GO" id="GO:0006888">
    <property type="term" value="P:endoplasmic reticulum to Golgi vesicle-mediated transport"/>
    <property type="evidence" value="ECO:0000318"/>
    <property type="project" value="GO_Central"/>
</dbReference>
<dbReference type="GO" id="GO:0007030">
    <property type="term" value="P:Golgi organization"/>
    <property type="evidence" value="ECO:0007669"/>
    <property type="project" value="Ensembl"/>
</dbReference>
<dbReference type="GO" id="GO:0070309">
    <property type="term" value="P:lens fiber cell morphogenesis"/>
    <property type="evidence" value="ECO:0007669"/>
    <property type="project" value="Ensembl"/>
</dbReference>
<dbReference type="GO" id="GO:0034389">
    <property type="term" value="P:lipid droplet organization"/>
    <property type="evidence" value="ECO:0007669"/>
    <property type="project" value="Ensembl"/>
</dbReference>
<dbReference type="GO" id="GO:0044829">
    <property type="term" value="P:positive regulation by host of viral genome replication"/>
    <property type="evidence" value="ECO:0007669"/>
    <property type="project" value="Ensembl"/>
</dbReference>
<dbReference type="GO" id="GO:0046726">
    <property type="term" value="P:positive regulation by virus of viral protein levels in host cell"/>
    <property type="evidence" value="ECO:0007669"/>
    <property type="project" value="Ensembl"/>
</dbReference>
<dbReference type="GO" id="GO:1902953">
    <property type="term" value="P:positive regulation of ER to Golgi vesicle-mediated transport"/>
    <property type="evidence" value="ECO:0007669"/>
    <property type="project" value="Ensembl"/>
</dbReference>
<dbReference type="GO" id="GO:0072520">
    <property type="term" value="P:seminiferous tubule development"/>
    <property type="evidence" value="ECO:0007669"/>
    <property type="project" value="Ensembl"/>
</dbReference>
<dbReference type="GO" id="GO:0019068">
    <property type="term" value="P:virion assembly"/>
    <property type="evidence" value="ECO:0007669"/>
    <property type="project" value="Ensembl"/>
</dbReference>
<dbReference type="FunFam" id="1.10.472.80:FF:000024">
    <property type="entry name" value="TBC1 domain family member 20"/>
    <property type="match status" value="1"/>
</dbReference>
<dbReference type="FunFam" id="1.10.8.1310:FF:000001">
    <property type="entry name" value="TBC1 domain family, member 20"/>
    <property type="match status" value="1"/>
</dbReference>
<dbReference type="Gene3D" id="1.10.8.1310">
    <property type="match status" value="1"/>
</dbReference>
<dbReference type="Gene3D" id="1.10.472.80">
    <property type="entry name" value="Ypt/Rab-GAP domain of gyp1p, domain 3"/>
    <property type="match status" value="1"/>
</dbReference>
<dbReference type="InterPro" id="IPR000195">
    <property type="entry name" value="Rab-GAP-TBC_dom"/>
</dbReference>
<dbReference type="InterPro" id="IPR035969">
    <property type="entry name" value="Rab-GAP_TBC_sf"/>
</dbReference>
<dbReference type="InterPro" id="IPR045913">
    <property type="entry name" value="TBC20/Gyp8-like"/>
</dbReference>
<dbReference type="PANTHER" id="PTHR20913:SF10">
    <property type="entry name" value="TBC1 DOMAIN FAMILY MEMBER 20"/>
    <property type="match status" value="1"/>
</dbReference>
<dbReference type="PANTHER" id="PTHR20913">
    <property type="entry name" value="TBC1 DOMAIN FAMILY MEMBER 20/GTPASE"/>
    <property type="match status" value="1"/>
</dbReference>
<dbReference type="Pfam" id="PF00566">
    <property type="entry name" value="RabGAP-TBC"/>
    <property type="match status" value="1"/>
</dbReference>
<dbReference type="SMART" id="SM00164">
    <property type="entry name" value="TBC"/>
    <property type="match status" value="1"/>
</dbReference>
<dbReference type="SUPFAM" id="SSF47923">
    <property type="entry name" value="Ypt/Rab-GAP domain of gyp1p"/>
    <property type="match status" value="2"/>
</dbReference>
<dbReference type="PROSITE" id="PS50086">
    <property type="entry name" value="TBC_RABGAP"/>
    <property type="match status" value="1"/>
</dbReference>
<feature type="chain" id="PRO_0000285597" description="TBC1 domain family member 20">
    <location>
        <begin position="1"/>
        <end position="403"/>
    </location>
</feature>
<feature type="transmembrane region" description="Helical" evidence="2">
    <location>
        <begin position="238"/>
        <end position="258"/>
    </location>
</feature>
<feature type="transmembrane region" description="Helical" evidence="2">
    <location>
        <begin position="367"/>
        <end position="387"/>
    </location>
</feature>
<feature type="domain" description="Rab-GAP TBC" evidence="3">
    <location>
        <begin position="60"/>
        <end position="246"/>
    </location>
</feature>
<feature type="region of interest" description="Disordered" evidence="4">
    <location>
        <begin position="1"/>
        <end position="29"/>
    </location>
</feature>
<feature type="compositionally biased region" description="Basic and acidic residues" evidence="4">
    <location>
        <begin position="18"/>
        <end position="27"/>
    </location>
</feature>
<feature type="site" description="Arginine finger" evidence="1">
    <location>
        <position position="105"/>
    </location>
</feature>
<feature type="site" description="Glutamine finger" evidence="1">
    <location>
        <position position="144"/>
    </location>
</feature>
<protein>
    <recommendedName>
        <fullName>TBC1 domain family member 20</fullName>
    </recommendedName>
</protein>
<accession>Q2T9Q1</accession>
<gene>
    <name type="primary">TBC1D20</name>
</gene>
<proteinExistence type="evidence at transcript level"/>
<name>TBC20_BOVIN</name>
<evidence type="ECO:0000250" key="1">
    <source>
        <dbReference type="UniProtKB" id="Q96BZ9"/>
    </source>
</evidence>
<evidence type="ECO:0000255" key="2"/>
<evidence type="ECO:0000255" key="3">
    <source>
        <dbReference type="PROSITE-ProRule" id="PRU00163"/>
    </source>
</evidence>
<evidence type="ECO:0000256" key="4">
    <source>
        <dbReference type="SAM" id="MobiDB-lite"/>
    </source>
</evidence>
<evidence type="ECO:0000305" key="5"/>
<organism>
    <name type="scientific">Bos taurus</name>
    <name type="common">Bovine</name>
    <dbReference type="NCBI Taxonomy" id="9913"/>
    <lineage>
        <taxon>Eukaryota</taxon>
        <taxon>Metazoa</taxon>
        <taxon>Chordata</taxon>
        <taxon>Craniata</taxon>
        <taxon>Vertebrata</taxon>
        <taxon>Euteleostomi</taxon>
        <taxon>Mammalia</taxon>
        <taxon>Eutheria</taxon>
        <taxon>Laurasiatheria</taxon>
        <taxon>Artiodactyla</taxon>
        <taxon>Ruminantia</taxon>
        <taxon>Pecora</taxon>
        <taxon>Bovidae</taxon>
        <taxon>Bovinae</taxon>
        <taxon>Bos</taxon>
    </lineage>
</organism>
<reference key="1">
    <citation type="submission" date="2005-12" db="EMBL/GenBank/DDBJ databases">
        <authorList>
            <consortium name="NIH - Mammalian Gene Collection (MGC) project"/>
        </authorList>
    </citation>
    <scope>NUCLEOTIDE SEQUENCE [LARGE SCALE MRNA]</scope>
    <source>
        <strain>Crossbred X Angus</strain>
        <tissue>Liver</tissue>
    </source>
</reference>
<keyword id="KW-0343">GTPase activation</keyword>
<keyword id="KW-0472">Membrane</keyword>
<keyword id="KW-1185">Reference proteome</keyword>
<keyword id="KW-0812">Transmembrane</keyword>
<keyword id="KW-1133">Transmembrane helix</keyword>
<comment type="function">
    <text evidence="1">GTPase-activating protein (GAP) specific for Rab1 and Rab2 small GTPase families for which it can accelerate the intrinsic GTP hydrolysis rate by more than five orders of magnitude. Also shows GAP activity for RAB18 GTPase. Promotes RAB18 dissociation from the endoplasmic reticulum (ER) membrane into the cytosol, probably through stimulating RAB18 GTP-hydrolysis. Involved in maintaining endoplasmic reticulum structure.</text>
</comment>
<comment type="subcellular location">
    <subcellularLocation>
        <location evidence="5">Membrane</location>
        <topology evidence="5">Multi-pass membrane protein</topology>
    </subcellularLocation>
</comment>
<comment type="domain">
    <text evidence="1">The arginine and glutamine fingers are critical for the GTPase-activating mechanism, they pull out Rab's 'switch 2' glutamine and insert in Rab's active site.</text>
</comment>